<keyword id="KW-0963">Cytoplasm</keyword>
<keyword id="KW-0444">Lipid biosynthesis</keyword>
<keyword id="KW-0443">Lipid metabolism</keyword>
<keyword id="KW-0520">NAD</keyword>
<keyword id="KW-0521">NADP</keyword>
<keyword id="KW-0547">Nucleotide-binding</keyword>
<keyword id="KW-0560">Oxidoreductase</keyword>
<keyword id="KW-0594">Phospholipid biosynthesis</keyword>
<keyword id="KW-1208">Phospholipid metabolism</keyword>
<keyword id="KW-1185">Reference proteome</keyword>
<sequence>MNIAVLGAGSWGTTLAVLLAKKGHDVRLWAHRPEFAATLDAERENRRYLKGVAFPDSLQITPHLQPLVSWSEMIVTAVPSQALRETILGFCTLDLSGKILVNVAKGIEIGTGKRMSEVLLEVLPGVCPSQVAALYGPSHAEEVSKGQPTTVVASSSSLATAEKVQEVFHTSMFRVYVNTDIVGVEIAGSVKNIIAIAAGISDGIGFGDNAKAAIITRGMAEISRLCSKLGGEAVTISGLAGIGDLVVTCLSRHSRNRYVGEEIGRGRSLDEVISQMNMIAEGVHSSRAVYELSRAVGVDMPITRAVYQMLFERKPVEQAILDLMTRDLKQERD</sequence>
<organism>
    <name type="scientific">Pelodictyon phaeoclathratiforme (strain DSM 5477 / BU-1)</name>
    <dbReference type="NCBI Taxonomy" id="324925"/>
    <lineage>
        <taxon>Bacteria</taxon>
        <taxon>Pseudomonadati</taxon>
        <taxon>Chlorobiota</taxon>
        <taxon>Chlorobiia</taxon>
        <taxon>Chlorobiales</taxon>
        <taxon>Chlorobiaceae</taxon>
        <taxon>Chlorobium/Pelodictyon group</taxon>
        <taxon>Pelodictyon</taxon>
    </lineage>
</organism>
<gene>
    <name evidence="1" type="primary">gpsA</name>
    <name type="ordered locus">Ppha_2815</name>
</gene>
<name>GPDA_PELPB</name>
<feature type="chain" id="PRO_1000123169" description="Glycerol-3-phosphate dehydrogenase [NAD(P)+]">
    <location>
        <begin position="1"/>
        <end position="333"/>
    </location>
</feature>
<feature type="active site" description="Proton acceptor" evidence="1">
    <location>
        <position position="191"/>
    </location>
</feature>
<feature type="binding site" evidence="1">
    <location>
        <position position="10"/>
    </location>
    <ligand>
        <name>NADPH</name>
        <dbReference type="ChEBI" id="CHEBI:57783"/>
    </ligand>
</feature>
<feature type="binding site" evidence="1">
    <location>
        <position position="11"/>
    </location>
    <ligand>
        <name>NADPH</name>
        <dbReference type="ChEBI" id="CHEBI:57783"/>
    </ligand>
</feature>
<feature type="binding site" evidence="1">
    <location>
        <position position="31"/>
    </location>
    <ligand>
        <name>NADPH</name>
        <dbReference type="ChEBI" id="CHEBI:57783"/>
    </ligand>
</feature>
<feature type="binding site" evidence="1">
    <location>
        <position position="32"/>
    </location>
    <ligand>
        <name>NADPH</name>
        <dbReference type="ChEBI" id="CHEBI:57783"/>
    </ligand>
</feature>
<feature type="binding site" evidence="1">
    <location>
        <position position="105"/>
    </location>
    <ligand>
        <name>NADPH</name>
        <dbReference type="ChEBI" id="CHEBI:57783"/>
    </ligand>
</feature>
<feature type="binding site" evidence="1">
    <location>
        <position position="105"/>
    </location>
    <ligand>
        <name>sn-glycerol 3-phosphate</name>
        <dbReference type="ChEBI" id="CHEBI:57597"/>
    </ligand>
</feature>
<feature type="binding site" evidence="1">
    <location>
        <position position="136"/>
    </location>
    <ligand>
        <name>sn-glycerol 3-phosphate</name>
        <dbReference type="ChEBI" id="CHEBI:57597"/>
    </ligand>
</feature>
<feature type="binding site" evidence="1">
    <location>
        <position position="138"/>
    </location>
    <ligand>
        <name>sn-glycerol 3-phosphate</name>
        <dbReference type="ChEBI" id="CHEBI:57597"/>
    </ligand>
</feature>
<feature type="binding site" evidence="1">
    <location>
        <position position="140"/>
    </location>
    <ligand>
        <name>NADPH</name>
        <dbReference type="ChEBI" id="CHEBI:57783"/>
    </ligand>
</feature>
<feature type="binding site" evidence="1">
    <location>
        <position position="191"/>
    </location>
    <ligand>
        <name>sn-glycerol 3-phosphate</name>
        <dbReference type="ChEBI" id="CHEBI:57597"/>
    </ligand>
</feature>
<feature type="binding site" evidence="1">
    <location>
        <position position="244"/>
    </location>
    <ligand>
        <name>sn-glycerol 3-phosphate</name>
        <dbReference type="ChEBI" id="CHEBI:57597"/>
    </ligand>
</feature>
<feature type="binding site" evidence="1">
    <location>
        <position position="254"/>
    </location>
    <ligand>
        <name>sn-glycerol 3-phosphate</name>
        <dbReference type="ChEBI" id="CHEBI:57597"/>
    </ligand>
</feature>
<feature type="binding site" evidence="1">
    <location>
        <position position="255"/>
    </location>
    <ligand>
        <name>NADPH</name>
        <dbReference type="ChEBI" id="CHEBI:57783"/>
    </ligand>
</feature>
<feature type="binding site" evidence="1">
    <location>
        <position position="255"/>
    </location>
    <ligand>
        <name>sn-glycerol 3-phosphate</name>
        <dbReference type="ChEBI" id="CHEBI:57597"/>
    </ligand>
</feature>
<feature type="binding site" evidence="1">
    <location>
        <position position="256"/>
    </location>
    <ligand>
        <name>sn-glycerol 3-phosphate</name>
        <dbReference type="ChEBI" id="CHEBI:57597"/>
    </ligand>
</feature>
<feature type="binding site" evidence="1">
    <location>
        <position position="279"/>
    </location>
    <ligand>
        <name>NADPH</name>
        <dbReference type="ChEBI" id="CHEBI:57783"/>
    </ligand>
</feature>
<feature type="binding site" evidence="1">
    <location>
        <position position="281"/>
    </location>
    <ligand>
        <name>NADPH</name>
        <dbReference type="ChEBI" id="CHEBI:57783"/>
    </ligand>
</feature>
<protein>
    <recommendedName>
        <fullName evidence="1">Glycerol-3-phosphate dehydrogenase [NAD(P)+]</fullName>
        <ecNumber evidence="1">1.1.1.94</ecNumber>
    </recommendedName>
    <alternativeName>
        <fullName evidence="1">NAD(P)(+)-dependent glycerol-3-phosphate dehydrogenase</fullName>
    </alternativeName>
    <alternativeName>
        <fullName evidence="1">NAD(P)H-dependent dihydroxyacetone-phosphate reductase</fullName>
    </alternativeName>
</protein>
<proteinExistence type="inferred from homology"/>
<evidence type="ECO:0000255" key="1">
    <source>
        <dbReference type="HAMAP-Rule" id="MF_00394"/>
    </source>
</evidence>
<reference key="1">
    <citation type="submission" date="2008-06" db="EMBL/GenBank/DDBJ databases">
        <title>Complete sequence of Pelodictyon phaeoclathratiforme BU-1.</title>
        <authorList>
            <consortium name="US DOE Joint Genome Institute"/>
            <person name="Lucas S."/>
            <person name="Copeland A."/>
            <person name="Lapidus A."/>
            <person name="Glavina del Rio T."/>
            <person name="Dalin E."/>
            <person name="Tice H."/>
            <person name="Bruce D."/>
            <person name="Goodwin L."/>
            <person name="Pitluck S."/>
            <person name="Schmutz J."/>
            <person name="Larimer F."/>
            <person name="Land M."/>
            <person name="Hauser L."/>
            <person name="Kyrpides N."/>
            <person name="Mikhailova N."/>
            <person name="Liu Z."/>
            <person name="Li T."/>
            <person name="Zhao F."/>
            <person name="Overmann J."/>
            <person name="Bryant D.A."/>
            <person name="Richardson P."/>
        </authorList>
    </citation>
    <scope>NUCLEOTIDE SEQUENCE [LARGE SCALE GENOMIC DNA]</scope>
    <source>
        <strain>DSM 5477 / BU-1</strain>
    </source>
</reference>
<accession>B4SGX6</accession>
<comment type="function">
    <text evidence="1">Catalyzes the reduction of the glycolytic intermediate dihydroxyacetone phosphate (DHAP) to sn-glycerol 3-phosphate (G3P), the key precursor for phospholipid synthesis.</text>
</comment>
<comment type="catalytic activity">
    <reaction evidence="1">
        <text>sn-glycerol 3-phosphate + NAD(+) = dihydroxyacetone phosphate + NADH + H(+)</text>
        <dbReference type="Rhea" id="RHEA:11092"/>
        <dbReference type="ChEBI" id="CHEBI:15378"/>
        <dbReference type="ChEBI" id="CHEBI:57540"/>
        <dbReference type="ChEBI" id="CHEBI:57597"/>
        <dbReference type="ChEBI" id="CHEBI:57642"/>
        <dbReference type="ChEBI" id="CHEBI:57945"/>
        <dbReference type="EC" id="1.1.1.94"/>
    </reaction>
    <physiologicalReaction direction="right-to-left" evidence="1">
        <dbReference type="Rhea" id="RHEA:11094"/>
    </physiologicalReaction>
</comment>
<comment type="catalytic activity">
    <reaction evidence="1">
        <text>sn-glycerol 3-phosphate + NADP(+) = dihydroxyacetone phosphate + NADPH + H(+)</text>
        <dbReference type="Rhea" id="RHEA:11096"/>
        <dbReference type="ChEBI" id="CHEBI:15378"/>
        <dbReference type="ChEBI" id="CHEBI:57597"/>
        <dbReference type="ChEBI" id="CHEBI:57642"/>
        <dbReference type="ChEBI" id="CHEBI:57783"/>
        <dbReference type="ChEBI" id="CHEBI:58349"/>
        <dbReference type="EC" id="1.1.1.94"/>
    </reaction>
    <physiologicalReaction direction="right-to-left" evidence="1">
        <dbReference type="Rhea" id="RHEA:11098"/>
    </physiologicalReaction>
</comment>
<comment type="pathway">
    <text evidence="1">Membrane lipid metabolism; glycerophospholipid metabolism.</text>
</comment>
<comment type="subcellular location">
    <subcellularLocation>
        <location evidence="1">Cytoplasm</location>
    </subcellularLocation>
</comment>
<comment type="similarity">
    <text evidence="1">Belongs to the NAD-dependent glycerol-3-phosphate dehydrogenase family.</text>
</comment>
<dbReference type="EC" id="1.1.1.94" evidence="1"/>
<dbReference type="EMBL" id="CP001110">
    <property type="protein sequence ID" value="ACF44964.1"/>
    <property type="molecule type" value="Genomic_DNA"/>
</dbReference>
<dbReference type="RefSeq" id="WP_012509432.1">
    <property type="nucleotide sequence ID" value="NC_011060.1"/>
</dbReference>
<dbReference type="SMR" id="B4SGX6"/>
<dbReference type="STRING" id="324925.Ppha_2815"/>
<dbReference type="KEGG" id="pph:Ppha_2815"/>
<dbReference type="eggNOG" id="COG0240">
    <property type="taxonomic scope" value="Bacteria"/>
</dbReference>
<dbReference type="HOGENOM" id="CLU_033449_0_2_10"/>
<dbReference type="OrthoDB" id="9812273at2"/>
<dbReference type="UniPathway" id="UPA00940"/>
<dbReference type="Proteomes" id="UP000002724">
    <property type="component" value="Chromosome"/>
</dbReference>
<dbReference type="GO" id="GO:0005829">
    <property type="term" value="C:cytosol"/>
    <property type="evidence" value="ECO:0007669"/>
    <property type="project" value="TreeGrafter"/>
</dbReference>
<dbReference type="GO" id="GO:0047952">
    <property type="term" value="F:glycerol-3-phosphate dehydrogenase [NAD(P)+] activity"/>
    <property type="evidence" value="ECO:0007669"/>
    <property type="project" value="UniProtKB-UniRule"/>
</dbReference>
<dbReference type="GO" id="GO:0051287">
    <property type="term" value="F:NAD binding"/>
    <property type="evidence" value="ECO:0007669"/>
    <property type="project" value="InterPro"/>
</dbReference>
<dbReference type="GO" id="GO:0005975">
    <property type="term" value="P:carbohydrate metabolic process"/>
    <property type="evidence" value="ECO:0007669"/>
    <property type="project" value="InterPro"/>
</dbReference>
<dbReference type="GO" id="GO:0046167">
    <property type="term" value="P:glycerol-3-phosphate biosynthetic process"/>
    <property type="evidence" value="ECO:0007669"/>
    <property type="project" value="UniProtKB-UniRule"/>
</dbReference>
<dbReference type="GO" id="GO:0046168">
    <property type="term" value="P:glycerol-3-phosphate catabolic process"/>
    <property type="evidence" value="ECO:0007669"/>
    <property type="project" value="InterPro"/>
</dbReference>
<dbReference type="GO" id="GO:0006650">
    <property type="term" value="P:glycerophospholipid metabolic process"/>
    <property type="evidence" value="ECO:0007669"/>
    <property type="project" value="UniProtKB-UniRule"/>
</dbReference>
<dbReference type="GO" id="GO:0008654">
    <property type="term" value="P:phospholipid biosynthetic process"/>
    <property type="evidence" value="ECO:0007669"/>
    <property type="project" value="UniProtKB-KW"/>
</dbReference>
<dbReference type="FunFam" id="1.10.1040.10:FF:000001">
    <property type="entry name" value="Glycerol-3-phosphate dehydrogenase [NAD(P)+]"/>
    <property type="match status" value="1"/>
</dbReference>
<dbReference type="FunFam" id="3.40.50.720:FF:000019">
    <property type="entry name" value="Glycerol-3-phosphate dehydrogenase [NAD(P)+]"/>
    <property type="match status" value="1"/>
</dbReference>
<dbReference type="Gene3D" id="1.10.1040.10">
    <property type="entry name" value="N-(1-d-carboxylethyl)-l-norvaline Dehydrogenase, domain 2"/>
    <property type="match status" value="1"/>
</dbReference>
<dbReference type="Gene3D" id="3.40.50.720">
    <property type="entry name" value="NAD(P)-binding Rossmann-like Domain"/>
    <property type="match status" value="1"/>
</dbReference>
<dbReference type="HAMAP" id="MF_00394">
    <property type="entry name" value="NAD_Glyc3P_dehydrog"/>
    <property type="match status" value="1"/>
</dbReference>
<dbReference type="InterPro" id="IPR008927">
    <property type="entry name" value="6-PGluconate_DH-like_C_sf"/>
</dbReference>
<dbReference type="InterPro" id="IPR013328">
    <property type="entry name" value="6PGD_dom2"/>
</dbReference>
<dbReference type="InterPro" id="IPR006168">
    <property type="entry name" value="G3P_DH_NAD-dep"/>
</dbReference>
<dbReference type="InterPro" id="IPR006109">
    <property type="entry name" value="G3P_DH_NAD-dep_C"/>
</dbReference>
<dbReference type="InterPro" id="IPR011128">
    <property type="entry name" value="G3P_DH_NAD-dep_N"/>
</dbReference>
<dbReference type="InterPro" id="IPR036291">
    <property type="entry name" value="NAD(P)-bd_dom_sf"/>
</dbReference>
<dbReference type="NCBIfam" id="NF000940">
    <property type="entry name" value="PRK00094.1-2"/>
    <property type="match status" value="1"/>
</dbReference>
<dbReference type="NCBIfam" id="NF000941">
    <property type="entry name" value="PRK00094.1-3"/>
    <property type="match status" value="1"/>
</dbReference>
<dbReference type="NCBIfam" id="NF000942">
    <property type="entry name" value="PRK00094.1-4"/>
    <property type="match status" value="1"/>
</dbReference>
<dbReference type="PANTHER" id="PTHR11728">
    <property type="entry name" value="GLYCEROL-3-PHOSPHATE DEHYDROGENASE"/>
    <property type="match status" value="1"/>
</dbReference>
<dbReference type="PANTHER" id="PTHR11728:SF1">
    <property type="entry name" value="GLYCEROL-3-PHOSPHATE DEHYDROGENASE [NAD(+)] 2, CHLOROPLASTIC"/>
    <property type="match status" value="1"/>
</dbReference>
<dbReference type="Pfam" id="PF07479">
    <property type="entry name" value="NAD_Gly3P_dh_C"/>
    <property type="match status" value="1"/>
</dbReference>
<dbReference type="Pfam" id="PF01210">
    <property type="entry name" value="NAD_Gly3P_dh_N"/>
    <property type="match status" value="1"/>
</dbReference>
<dbReference type="PIRSF" id="PIRSF000114">
    <property type="entry name" value="Glycerol-3-P_dh"/>
    <property type="match status" value="1"/>
</dbReference>
<dbReference type="PRINTS" id="PR00077">
    <property type="entry name" value="GPDHDRGNASE"/>
</dbReference>
<dbReference type="SUPFAM" id="SSF48179">
    <property type="entry name" value="6-phosphogluconate dehydrogenase C-terminal domain-like"/>
    <property type="match status" value="1"/>
</dbReference>
<dbReference type="SUPFAM" id="SSF51735">
    <property type="entry name" value="NAD(P)-binding Rossmann-fold domains"/>
    <property type="match status" value="1"/>
</dbReference>
<dbReference type="PROSITE" id="PS00957">
    <property type="entry name" value="NAD_G3PDH"/>
    <property type="match status" value="1"/>
</dbReference>